<keyword id="KW-0058">Aromatic hydrocarbons catabolism</keyword>
<keyword id="KW-0520">NAD</keyword>
<keyword id="KW-0560">Oxidoreductase</keyword>
<gene>
    <name evidence="1" type="primary">hcaB</name>
    <name type="ordered locus">ECH74115_3773</name>
</gene>
<sequence>MSDLHNESIFITGGGSGLGLALVERFIEEGAQVATLELSAAKVASLRQRFGEHILAVEGNVTCYADYQRAVDQILTRSGKLDCFIGNAGIWDHNASLVNTPAETLETGFHELFNVNVLGYLLGAKACAPALIAGEGSMIFTLSNAAWYPGGGGPLYTASKHAATGLIRQLAYELAPKVRVNGVGPCGMASDLRGPQALGQSETSIMQSLTPEKIAAILPLQFFPQPADFTGPYVMLASRRNNRALSGVMINADAGLAIRGIRHVAAGLDL</sequence>
<accession>B5Z114</accession>
<comment type="function">
    <text evidence="1">Converts 3-phenylpropionate-dihydrodiol (PP-dihydrodiol) and cinnamic acid-dihydrodiol (CI-dihydrodiol) into 3-(2,3-dihydroxylphenyl)propanoic acid (DHPP) and 2,3-dihydroxicinnamic acid (DHCI), respectively.</text>
</comment>
<comment type="catalytic activity">
    <reaction evidence="1">
        <text>3-(cis-5,6-dihydroxycyclohexa-1,3-dien-1-yl)propanoate + NAD(+) = 3-(2,3-dihydroxyphenyl)propanoate + NADH + H(+)</text>
        <dbReference type="Rhea" id="RHEA:25062"/>
        <dbReference type="ChEBI" id="CHEBI:15378"/>
        <dbReference type="ChEBI" id="CHEBI:46951"/>
        <dbReference type="ChEBI" id="CHEBI:57540"/>
        <dbReference type="ChEBI" id="CHEBI:57945"/>
        <dbReference type="ChEBI" id="CHEBI:60087"/>
        <dbReference type="EC" id="1.3.1.87"/>
    </reaction>
</comment>
<comment type="catalytic activity">
    <reaction evidence="1">
        <text>(2E)-3-(cis-5,6-dihydroxycyclohexa-1,3-dien-1-yl)prop-2-enoate + NAD(+) = (2E)-3-(2,3-dihydroxyphenyl)prop-2-enoate + NADH + H(+)</text>
        <dbReference type="Rhea" id="RHEA:25066"/>
        <dbReference type="ChEBI" id="CHEBI:15378"/>
        <dbReference type="ChEBI" id="CHEBI:57540"/>
        <dbReference type="ChEBI" id="CHEBI:57945"/>
        <dbReference type="ChEBI" id="CHEBI:58642"/>
        <dbReference type="ChEBI" id="CHEBI:61451"/>
        <dbReference type="EC" id="1.3.1.87"/>
    </reaction>
</comment>
<comment type="pathway">
    <text evidence="1">Aromatic compound metabolism; 3-phenylpropanoate degradation.</text>
</comment>
<comment type="similarity">
    <text evidence="1">Belongs to the short-chain dehydrogenases/reductases (SDR) family.</text>
</comment>
<dbReference type="EC" id="1.3.1.87" evidence="1"/>
<dbReference type="EMBL" id="CP001164">
    <property type="protein sequence ID" value="ACI36557.1"/>
    <property type="molecule type" value="Genomic_DNA"/>
</dbReference>
<dbReference type="RefSeq" id="WP_001281372.1">
    <property type="nucleotide sequence ID" value="NC_011353.1"/>
</dbReference>
<dbReference type="SMR" id="B5Z114"/>
<dbReference type="GeneID" id="75172654"/>
<dbReference type="KEGG" id="ecf:ECH74115_3773"/>
<dbReference type="HOGENOM" id="CLU_010194_1_0_6"/>
<dbReference type="UniPathway" id="UPA00714"/>
<dbReference type="GO" id="GO:0018498">
    <property type="term" value="F:2,3-dihydroxy-2,3-dihydro-phenylpropionate dehydrogenase activity"/>
    <property type="evidence" value="ECO:0007669"/>
    <property type="project" value="UniProtKB-UniRule"/>
</dbReference>
<dbReference type="GO" id="GO:0019380">
    <property type="term" value="P:3-phenylpropionate catabolic process"/>
    <property type="evidence" value="ECO:0007669"/>
    <property type="project" value="UniProtKB-UniRule"/>
</dbReference>
<dbReference type="CDD" id="cd05348">
    <property type="entry name" value="BphB-like_SDR_c"/>
    <property type="match status" value="1"/>
</dbReference>
<dbReference type="FunFam" id="3.40.50.720:FF:000151">
    <property type="entry name" value="3-phenylpropionate-dihydrodiol/cinnamic acid-dihydrodiol dehydrogenase"/>
    <property type="match status" value="1"/>
</dbReference>
<dbReference type="Gene3D" id="3.40.50.720">
    <property type="entry name" value="NAD(P)-binding Rossmann-like Domain"/>
    <property type="match status" value="1"/>
</dbReference>
<dbReference type="HAMAP" id="MF_01647">
    <property type="entry name" value="HcaB"/>
    <property type="match status" value="1"/>
</dbReference>
<dbReference type="InterPro" id="IPR047950">
    <property type="entry name" value="BphB-like_SDR"/>
</dbReference>
<dbReference type="InterPro" id="IPR023643">
    <property type="entry name" value="Dihydrodiol_DH_HcaB"/>
</dbReference>
<dbReference type="InterPro" id="IPR036291">
    <property type="entry name" value="NAD(P)-bd_dom_sf"/>
</dbReference>
<dbReference type="InterPro" id="IPR020904">
    <property type="entry name" value="Sc_DH/Rdtase_CS"/>
</dbReference>
<dbReference type="InterPro" id="IPR002347">
    <property type="entry name" value="SDR_fam"/>
</dbReference>
<dbReference type="NCBIfam" id="NF042950">
    <property type="entry name" value="3PPDhyd_Dh_HcaB"/>
    <property type="match status" value="1"/>
</dbReference>
<dbReference type="NCBIfam" id="NF004849">
    <property type="entry name" value="PRK06200.1"/>
    <property type="match status" value="1"/>
</dbReference>
<dbReference type="PANTHER" id="PTHR43943:SF17">
    <property type="entry name" value="3-PHENYLPROPIONATE-DIHYDRODIOL_CINNAMIC ACID-DIHYDRODIOL DEHYDROGENASE"/>
    <property type="match status" value="1"/>
</dbReference>
<dbReference type="PANTHER" id="PTHR43943">
    <property type="entry name" value="DEHYDROGENASE/REDUCTASE (SDR FAMILY) MEMBER 4"/>
    <property type="match status" value="1"/>
</dbReference>
<dbReference type="Pfam" id="PF00106">
    <property type="entry name" value="adh_short"/>
    <property type="match status" value="1"/>
</dbReference>
<dbReference type="PRINTS" id="PR00081">
    <property type="entry name" value="GDHRDH"/>
</dbReference>
<dbReference type="PRINTS" id="PR00080">
    <property type="entry name" value="SDRFAMILY"/>
</dbReference>
<dbReference type="SUPFAM" id="SSF51735">
    <property type="entry name" value="NAD(P)-binding Rossmann-fold domains"/>
    <property type="match status" value="1"/>
</dbReference>
<dbReference type="PROSITE" id="PS00061">
    <property type="entry name" value="ADH_SHORT"/>
    <property type="match status" value="1"/>
</dbReference>
<protein>
    <recommendedName>
        <fullName evidence="1">3-phenylpropionate-dihydrodiol/cinnamic acid-dihydrodiol dehydrogenase</fullName>
        <ecNumber evidence="1">1.3.1.87</ecNumber>
    </recommendedName>
    <alternativeName>
        <fullName evidence="1">2,3-dihydroxy-2,3-dihydrophenylpropionate dehydrogenase</fullName>
    </alternativeName>
    <alternativeName>
        <fullName evidence="1">3-(cis-5,6-dihydroxycyclohexa-1,3-dien-1-yl)propanoate dehydrogenase</fullName>
    </alternativeName>
    <alternativeName>
        <fullName evidence="1">CI-dihydrodiol dehydrogenase</fullName>
    </alternativeName>
    <alternativeName>
        <fullName evidence="1">Cis-3-(2-carboxyethenyl)-3,5-cyclohexadiene-1,2-diol dehydrogenase</fullName>
    </alternativeName>
    <alternativeName>
        <fullName evidence="1">Cis-3-(2-carboxyethyl)-3,5-cyclohexadiene-1,2-diol dehydrogenase</fullName>
    </alternativeName>
    <alternativeName>
        <fullName evidence="1">PP-dihydrodiol dehydrogenase</fullName>
    </alternativeName>
</protein>
<name>HCAB_ECO5E</name>
<proteinExistence type="inferred from homology"/>
<reference key="1">
    <citation type="journal article" date="2011" name="Proc. Natl. Acad. Sci. U.S.A.">
        <title>Genomic anatomy of Escherichia coli O157:H7 outbreaks.</title>
        <authorList>
            <person name="Eppinger M."/>
            <person name="Mammel M.K."/>
            <person name="Leclerc J.E."/>
            <person name="Ravel J."/>
            <person name="Cebula T.A."/>
        </authorList>
    </citation>
    <scope>NUCLEOTIDE SEQUENCE [LARGE SCALE GENOMIC DNA]</scope>
    <source>
        <strain>EC4115 / EHEC</strain>
    </source>
</reference>
<organism>
    <name type="scientific">Escherichia coli O157:H7 (strain EC4115 / EHEC)</name>
    <dbReference type="NCBI Taxonomy" id="444450"/>
    <lineage>
        <taxon>Bacteria</taxon>
        <taxon>Pseudomonadati</taxon>
        <taxon>Pseudomonadota</taxon>
        <taxon>Gammaproteobacteria</taxon>
        <taxon>Enterobacterales</taxon>
        <taxon>Enterobacteriaceae</taxon>
        <taxon>Escherichia</taxon>
    </lineage>
</organism>
<feature type="chain" id="PRO_1000186964" description="3-phenylpropionate-dihydrodiol/cinnamic acid-dihydrodiol dehydrogenase">
    <location>
        <begin position="1"/>
        <end position="270"/>
    </location>
</feature>
<feature type="active site" description="Proton acceptor" evidence="1">
    <location>
        <position position="156"/>
    </location>
</feature>
<feature type="binding site" evidence="1">
    <location>
        <begin position="10"/>
        <end position="34"/>
    </location>
    <ligand>
        <name>NAD(+)</name>
        <dbReference type="ChEBI" id="CHEBI:57540"/>
    </ligand>
</feature>
<feature type="binding site" evidence="1">
    <location>
        <position position="143"/>
    </location>
    <ligand>
        <name>substrate</name>
    </ligand>
</feature>
<evidence type="ECO:0000255" key="1">
    <source>
        <dbReference type="HAMAP-Rule" id="MF_01647"/>
    </source>
</evidence>